<organism>
    <name type="scientific">Drosophila virilis</name>
    <name type="common">Fruit fly</name>
    <dbReference type="NCBI Taxonomy" id="7244"/>
    <lineage>
        <taxon>Eukaryota</taxon>
        <taxon>Metazoa</taxon>
        <taxon>Ecdysozoa</taxon>
        <taxon>Arthropoda</taxon>
        <taxon>Hexapoda</taxon>
        <taxon>Insecta</taxon>
        <taxon>Pterygota</taxon>
        <taxon>Neoptera</taxon>
        <taxon>Endopterygota</taxon>
        <taxon>Diptera</taxon>
        <taxon>Brachycera</taxon>
        <taxon>Muscomorpha</taxon>
        <taxon>Ephydroidea</taxon>
        <taxon>Drosophilidae</taxon>
        <taxon>Drosophila</taxon>
    </lineage>
</organism>
<reference key="1">
    <citation type="journal article" date="2007" name="Nature">
        <title>Evolution of genes and genomes on the Drosophila phylogeny.</title>
        <authorList>
            <consortium name="Drosophila 12 genomes consortium"/>
        </authorList>
    </citation>
    <scope>NUCLEOTIDE SEQUENCE [LARGE SCALE GENOMIC DNA]</scope>
    <source>
        <strain>Tucson 15010-1051.87</strain>
    </source>
</reference>
<keyword id="KW-0963">Cytoplasm</keyword>
<keyword id="KW-0479">Metal-binding</keyword>
<keyword id="KW-1185">Reference proteome</keyword>
<keyword id="KW-0819">tRNA processing</keyword>
<keyword id="KW-0862">Zinc</keyword>
<dbReference type="EMBL" id="CH940647">
    <property type="protein sequence ID" value="EDW69339.1"/>
    <property type="molecule type" value="Genomic_DNA"/>
</dbReference>
<dbReference type="SMR" id="B4LFW2"/>
<dbReference type="FunCoup" id="B4LFW2">
    <property type="interactions" value="1500"/>
</dbReference>
<dbReference type="STRING" id="7244.B4LFW2"/>
<dbReference type="EnsemblMetazoa" id="FBtr0229111">
    <property type="protein sequence ID" value="FBpp0227603"/>
    <property type="gene ID" value="FBgn0200412"/>
</dbReference>
<dbReference type="EnsemblMetazoa" id="XM_002046961.3">
    <property type="protein sequence ID" value="XP_002046997.1"/>
    <property type="gene ID" value="LOC6622531"/>
</dbReference>
<dbReference type="GeneID" id="6622531"/>
<dbReference type="KEGG" id="dvi:6622531"/>
<dbReference type="eggNOG" id="KOG3909">
    <property type="taxonomic scope" value="Eukaryota"/>
</dbReference>
<dbReference type="HOGENOM" id="CLU_037350_0_0_1"/>
<dbReference type="InParanoid" id="B4LFW2"/>
<dbReference type="OMA" id="MAGSRMK"/>
<dbReference type="OrthoDB" id="27601at2759"/>
<dbReference type="PhylomeDB" id="B4LFW2"/>
<dbReference type="Proteomes" id="UP000008792">
    <property type="component" value="Unassembled WGS sequence"/>
</dbReference>
<dbReference type="GO" id="GO:0005737">
    <property type="term" value="C:cytoplasm"/>
    <property type="evidence" value="ECO:0007669"/>
    <property type="project" value="UniProtKB-SubCell"/>
</dbReference>
<dbReference type="GO" id="GO:0046872">
    <property type="term" value="F:metal ion binding"/>
    <property type="evidence" value="ECO:0007669"/>
    <property type="project" value="UniProtKB-KW"/>
</dbReference>
<dbReference type="GO" id="GO:0008479">
    <property type="term" value="F:tRNA-guanosine(34) queuine transglycosylase activity"/>
    <property type="evidence" value="ECO:0007669"/>
    <property type="project" value="UniProtKB-UniRule"/>
</dbReference>
<dbReference type="GO" id="GO:0101030">
    <property type="term" value="P:tRNA-guanine transglycosylation"/>
    <property type="evidence" value="ECO:0007669"/>
    <property type="project" value="UniProtKB-UniRule"/>
</dbReference>
<dbReference type="FunFam" id="3.20.20.105:FF:000008">
    <property type="entry name" value="Queuine tRNA-ribosyltransferase accessory subunit 2"/>
    <property type="match status" value="1"/>
</dbReference>
<dbReference type="Gene3D" id="3.20.20.105">
    <property type="entry name" value="Queuine tRNA-ribosyltransferase-like"/>
    <property type="match status" value="1"/>
</dbReference>
<dbReference type="HAMAP" id="MF_03043">
    <property type="entry name" value="QTRT2"/>
    <property type="match status" value="1"/>
</dbReference>
<dbReference type="InterPro" id="IPR028592">
    <property type="entry name" value="QTRTD1"/>
</dbReference>
<dbReference type="InterPro" id="IPR050852">
    <property type="entry name" value="Queuine_tRNA-ribosyltrfase"/>
</dbReference>
<dbReference type="InterPro" id="IPR036511">
    <property type="entry name" value="TGT-like_sf"/>
</dbReference>
<dbReference type="InterPro" id="IPR002616">
    <property type="entry name" value="tRNA_ribo_trans-like"/>
</dbReference>
<dbReference type="NCBIfam" id="TIGR00449">
    <property type="entry name" value="tgt_general"/>
    <property type="match status" value="1"/>
</dbReference>
<dbReference type="PANTHER" id="PTHR46064">
    <property type="entry name" value="QUEUINE TRNA-RIBOSYLTRANSFERASE ACCESSORY SUBUNIT 2"/>
    <property type="match status" value="1"/>
</dbReference>
<dbReference type="PANTHER" id="PTHR46064:SF1">
    <property type="entry name" value="QUEUINE TRNA-RIBOSYLTRANSFERASE ACCESSORY SUBUNIT 2"/>
    <property type="match status" value="1"/>
</dbReference>
<dbReference type="Pfam" id="PF01702">
    <property type="entry name" value="TGT"/>
    <property type="match status" value="1"/>
</dbReference>
<dbReference type="SUPFAM" id="SSF51713">
    <property type="entry name" value="tRNA-guanine transglycosylase"/>
    <property type="match status" value="1"/>
</dbReference>
<protein>
    <recommendedName>
        <fullName evidence="1">Queuine tRNA-ribosyltransferase accessory subunit 2</fullName>
    </recommendedName>
    <alternativeName>
        <fullName evidence="1">Queuine tRNA-ribosyltransferase domain-containing protein 1</fullName>
    </alternativeName>
</protein>
<name>QTRT2_DROVI</name>
<proteinExistence type="inferred from homology"/>
<comment type="function">
    <text evidence="1">Non-catalytic subunit of the queuine tRNA-ribosyltransferase (TGT) that catalyzes the base-exchange of a guanine (G) residue with queuine (Q) at position 34 (anticodon wobble position) in tRNAs with GU(N) anticodons (tRNA-Asp, -Asn, -His and -Tyr), resulting in the hypermodified nucleoside queuosine (7-(((4,5-cis-dihydroxy-2-cyclopenten-1-yl)amino)methyl)-7-deazaguanosine).</text>
</comment>
<comment type="cofactor">
    <cofactor evidence="1">
        <name>Zn(2+)</name>
        <dbReference type="ChEBI" id="CHEBI:29105"/>
    </cofactor>
    <text evidence="1">Binds 1 zinc ion per subunit.</text>
</comment>
<comment type="subunit">
    <text evidence="1">Heterodimer of a catalytic subunit and an accessory subunit.</text>
</comment>
<comment type="subcellular location">
    <subcellularLocation>
        <location evidence="1">Cytoplasm</location>
    </subcellularLocation>
</comment>
<comment type="similarity">
    <text evidence="1">Belongs to the queuine tRNA-ribosyltransferase family. QTRT2 subfamily.</text>
</comment>
<sequence length="417" mass="46807">MKFVLKSISKNSGRLGQLRIKQSKELQTPLLLQTTKGGSIPYLSAEVFDLVSQEHQQVLQLTLSTMDQMSESLAQWNRSLSDYVGYPGYNTLLLLRDPCETTPTGGNDRDVVPLFTRHGKESLTAARYMDMVANFAPDVYQGLCDADTNPESTKKRVQKSVDRTERFMELCYEQHSKLARLKDSTLLAPIVGGYSTFARTQSIKHARQQPAGSYGGYILEGFHTNGLAATELKAAQLLPIVEHCVQQLEEEQPRLMPGAYTPLLLLELIRLGVDVFDSSYAYCAATNYKALTFSYVRDKAEHAAFLDVTDEAIKEDFKPLLEDCSCLSCQKHTRAYIHHLYKTHELLGTILLMIHNLHHYMCFFEAIRASMAADQLPELIEHVRMQNTTAEVNYRIEPNNKVVGKAAMGKGFIAAAV</sequence>
<feature type="chain" id="PRO_0000383941" description="Queuine tRNA-ribosyltransferase accessory subunit 2">
    <location>
        <begin position="1"/>
        <end position="417"/>
    </location>
</feature>
<feature type="binding site" evidence="1">
    <location>
        <position position="324"/>
    </location>
    <ligand>
        <name>Zn(2+)</name>
        <dbReference type="ChEBI" id="CHEBI:29105"/>
    </ligand>
</feature>
<feature type="binding site" evidence="1">
    <location>
        <position position="326"/>
    </location>
    <ligand>
        <name>Zn(2+)</name>
        <dbReference type="ChEBI" id="CHEBI:29105"/>
    </ligand>
</feature>
<feature type="binding site" evidence="1">
    <location>
        <position position="329"/>
    </location>
    <ligand>
        <name>Zn(2+)</name>
        <dbReference type="ChEBI" id="CHEBI:29105"/>
    </ligand>
</feature>
<feature type="binding site" evidence="1">
    <location>
        <position position="355"/>
    </location>
    <ligand>
        <name>Zn(2+)</name>
        <dbReference type="ChEBI" id="CHEBI:29105"/>
    </ligand>
</feature>
<accession>B4LFW2</accession>
<gene>
    <name type="ORF">GJ13186</name>
</gene>
<evidence type="ECO:0000255" key="1">
    <source>
        <dbReference type="HAMAP-Rule" id="MF_03043"/>
    </source>
</evidence>